<proteinExistence type="evidence at protein level"/>
<comment type="subunit">
    <text>Homodimer; disulfide-linked.</text>
</comment>
<comment type="tissue specificity">
    <text>Smooth muscle and non-muscle tissues.</text>
</comment>
<comment type="miscellaneous">
    <text>Binds two calcium ions per molecule with an affinity similar to that of the S100 proteins.</text>
</comment>
<comment type="similarity">
    <text evidence="2">Belongs to the S-100 family.</text>
</comment>
<dbReference type="EMBL" id="U77733">
    <property type="protein sequence ID" value="AAB36542.1"/>
    <property type="molecule type" value="mRNA"/>
</dbReference>
<dbReference type="PIR" id="A41004">
    <property type="entry name" value="A41004"/>
</dbReference>
<dbReference type="RefSeq" id="NP_990497.1">
    <property type="nucleotide sequence ID" value="NM_205166.3"/>
</dbReference>
<dbReference type="SMR" id="P24479"/>
<dbReference type="FunCoup" id="P24479">
    <property type="interactions" value="1536"/>
</dbReference>
<dbReference type="STRING" id="9031.ENSGALP00000047847"/>
<dbReference type="PaxDb" id="9031-ENSGALP00000014912"/>
<dbReference type="GeneID" id="396075"/>
<dbReference type="KEGG" id="gga:396075"/>
<dbReference type="CTD" id="6282"/>
<dbReference type="VEuPathDB" id="HostDB:geneid_396075"/>
<dbReference type="eggNOG" id="ENOG502SS6H">
    <property type="taxonomic scope" value="Eukaryota"/>
</dbReference>
<dbReference type="HOGENOM" id="CLU_138624_1_0_1"/>
<dbReference type="InParanoid" id="P24479"/>
<dbReference type="OMA" id="MACEKCY"/>
<dbReference type="OrthoDB" id="9451669at2759"/>
<dbReference type="PhylomeDB" id="P24479"/>
<dbReference type="TreeFam" id="TF332727"/>
<dbReference type="Reactome" id="R-GGA-6798695">
    <property type="pathway name" value="Neutrophil degranulation"/>
</dbReference>
<dbReference type="PRO" id="PR:P24479"/>
<dbReference type="Proteomes" id="UP000000539">
    <property type="component" value="Chromosome 25"/>
</dbReference>
<dbReference type="Bgee" id="ENSGALG00000036711">
    <property type="expression patterns" value="Expressed in granulocyte and 14 other cell types or tissues"/>
</dbReference>
<dbReference type="GO" id="GO:0005737">
    <property type="term" value="C:cytoplasm"/>
    <property type="evidence" value="ECO:0000318"/>
    <property type="project" value="GO_Central"/>
</dbReference>
<dbReference type="GO" id="GO:0005509">
    <property type="term" value="F:calcium ion binding"/>
    <property type="evidence" value="ECO:0000318"/>
    <property type="project" value="GO_Central"/>
</dbReference>
<dbReference type="GO" id="GO:0048306">
    <property type="term" value="F:calcium-dependent protein binding"/>
    <property type="evidence" value="ECO:0000318"/>
    <property type="project" value="GO_Central"/>
</dbReference>
<dbReference type="GO" id="GO:0044548">
    <property type="term" value="F:S100 protein binding"/>
    <property type="evidence" value="ECO:0000318"/>
    <property type="project" value="GO_Central"/>
</dbReference>
<dbReference type="GO" id="GO:0042127">
    <property type="term" value="P:regulation of cell population proliferation"/>
    <property type="evidence" value="ECO:0007669"/>
    <property type="project" value="InterPro"/>
</dbReference>
<dbReference type="CDD" id="cd05023">
    <property type="entry name" value="S-100A11"/>
    <property type="match status" value="1"/>
</dbReference>
<dbReference type="Gene3D" id="1.10.238.10">
    <property type="entry name" value="EF-hand"/>
    <property type="match status" value="1"/>
</dbReference>
<dbReference type="InterPro" id="IPR011992">
    <property type="entry name" value="EF-hand-dom_pair"/>
</dbReference>
<dbReference type="InterPro" id="IPR018247">
    <property type="entry name" value="EF_Hand_1_Ca_BS"/>
</dbReference>
<dbReference type="InterPro" id="IPR002048">
    <property type="entry name" value="EF_hand_dom"/>
</dbReference>
<dbReference type="InterPro" id="IPR001751">
    <property type="entry name" value="S100/CaBP7/8-like_CS"/>
</dbReference>
<dbReference type="InterPro" id="IPR013787">
    <property type="entry name" value="S100_Ca-bd_sub"/>
</dbReference>
<dbReference type="InterPro" id="IPR028482">
    <property type="entry name" value="S100A11"/>
</dbReference>
<dbReference type="PANTHER" id="PTHR11639:SF60">
    <property type="entry name" value="PROTEIN S100-A11"/>
    <property type="match status" value="1"/>
</dbReference>
<dbReference type="PANTHER" id="PTHR11639">
    <property type="entry name" value="S100 CALCIUM-BINDING PROTEIN"/>
    <property type="match status" value="1"/>
</dbReference>
<dbReference type="Pfam" id="PF00036">
    <property type="entry name" value="EF-hand_1"/>
    <property type="match status" value="1"/>
</dbReference>
<dbReference type="Pfam" id="PF01023">
    <property type="entry name" value="S_100"/>
    <property type="match status" value="1"/>
</dbReference>
<dbReference type="SMART" id="SM00054">
    <property type="entry name" value="EFh"/>
    <property type="match status" value="1"/>
</dbReference>
<dbReference type="SMART" id="SM01394">
    <property type="entry name" value="S_100"/>
    <property type="match status" value="1"/>
</dbReference>
<dbReference type="SUPFAM" id="SSF47473">
    <property type="entry name" value="EF-hand"/>
    <property type="match status" value="1"/>
</dbReference>
<dbReference type="PROSITE" id="PS00018">
    <property type="entry name" value="EF_HAND_1"/>
    <property type="match status" value="1"/>
</dbReference>
<dbReference type="PROSITE" id="PS50222">
    <property type="entry name" value="EF_HAND_2"/>
    <property type="match status" value="2"/>
</dbReference>
<dbReference type="PROSITE" id="PS00303">
    <property type="entry name" value="S100_CABP"/>
    <property type="match status" value="1"/>
</dbReference>
<evidence type="ECO:0000255" key="1">
    <source>
        <dbReference type="PROSITE-ProRule" id="PRU00448"/>
    </source>
</evidence>
<evidence type="ECO:0000305" key="2"/>
<gene>
    <name type="primary">S100A11</name>
</gene>
<organism>
    <name type="scientific">Gallus gallus</name>
    <name type="common">Chicken</name>
    <dbReference type="NCBI Taxonomy" id="9031"/>
    <lineage>
        <taxon>Eukaryota</taxon>
        <taxon>Metazoa</taxon>
        <taxon>Chordata</taxon>
        <taxon>Craniata</taxon>
        <taxon>Vertebrata</taxon>
        <taxon>Euteleostomi</taxon>
        <taxon>Archelosauria</taxon>
        <taxon>Archosauria</taxon>
        <taxon>Dinosauria</taxon>
        <taxon>Saurischia</taxon>
        <taxon>Theropoda</taxon>
        <taxon>Coelurosauria</taxon>
        <taxon>Aves</taxon>
        <taxon>Neognathae</taxon>
        <taxon>Galloanserae</taxon>
        <taxon>Galliformes</taxon>
        <taxon>Phasianidae</taxon>
        <taxon>Phasianinae</taxon>
        <taxon>Gallus</taxon>
    </lineage>
</organism>
<accession>P24479</accession>
<protein>
    <recommendedName>
        <fullName>Protein S100-A11</fullName>
    </recommendedName>
    <alternativeName>
        <fullName>Calgizzarin</fullName>
    </alternativeName>
    <alternativeName>
        <fullName>S100 calcium-binding protein A11</fullName>
    </alternativeName>
</protein>
<keyword id="KW-0106">Calcium</keyword>
<keyword id="KW-0903">Direct protein sequencing</keyword>
<keyword id="KW-1015">Disulfide bond</keyword>
<keyword id="KW-0479">Metal-binding</keyword>
<keyword id="KW-1185">Reference proteome</keyword>
<keyword id="KW-0677">Repeat</keyword>
<reference key="1">
    <citation type="journal article" date="1997" name="Biochem. Cell Biol.">
        <title>Molecular cloning and expression of avian smooth muscle S100A11 (calgizzarin, S100C).</title>
        <authorList>
            <person name="Schonekess B.O."/>
            <person name="Walsh M.P."/>
        </authorList>
    </citation>
    <scope>NUCLEOTIDE SEQUENCE [MRNA]</scope>
    <source>
        <tissue>Gizzard</tissue>
    </source>
</reference>
<reference key="2">
    <citation type="journal article" date="1991" name="J. Biol. Chem.">
        <title>Purification, characterization, and partial sequence analysis of a newly identified EF-hand type 13-kDa Ca(2+)-binding protein from smooth muscle and non-muscle tissues.</title>
        <authorList>
            <person name="Todoroki H."/>
            <person name="Kobayashi R."/>
            <person name="Watanabe M."/>
            <person name="Minami H."/>
            <person name="Hidaka H."/>
        </authorList>
    </citation>
    <scope>PROTEIN SEQUENCE OF 15-79</scope>
    <source>
        <tissue>Gizzard smooth muscle</tissue>
    </source>
</reference>
<sequence length="101" mass="11413">MSKVSPTETERCIESLLAVFQRYAGREGDNLKLSKKEFRTFMNTELASFTKNQKDPAVVDRMMKRLDINSDGQLDFQEFLNLIGGIAVACHDALLVQPPHP</sequence>
<feature type="chain" id="PRO_0000144014" description="Protein S100-A11">
    <location>
        <begin position="1"/>
        <end position="101"/>
    </location>
</feature>
<feature type="domain" description="EF-hand 1" evidence="1">
    <location>
        <begin position="13"/>
        <end position="48"/>
    </location>
</feature>
<feature type="domain" description="EF-hand 2" evidence="1">
    <location>
        <begin position="54"/>
        <end position="89"/>
    </location>
</feature>
<feature type="binding site" evidence="2">
    <location>
        <position position="30"/>
    </location>
    <ligand>
        <name>Ca(2+)</name>
        <dbReference type="ChEBI" id="CHEBI:29108"/>
        <label>1</label>
        <note>low affinity</note>
    </ligand>
</feature>
<feature type="binding site" evidence="2">
    <location>
        <position position="32"/>
    </location>
    <ligand>
        <name>Ca(2+)</name>
        <dbReference type="ChEBI" id="CHEBI:29108"/>
        <label>1</label>
        <note>low affinity</note>
    </ligand>
</feature>
<feature type="binding site" evidence="2">
    <location>
        <position position="37"/>
    </location>
    <ligand>
        <name>Ca(2+)</name>
        <dbReference type="ChEBI" id="CHEBI:29108"/>
        <label>1</label>
        <note>low affinity</note>
    </ligand>
</feature>
<feature type="binding site" evidence="1">
    <location>
        <position position="67"/>
    </location>
    <ligand>
        <name>Ca(2+)</name>
        <dbReference type="ChEBI" id="CHEBI:29108"/>
        <label>2</label>
        <note>high affinity</note>
    </ligand>
</feature>
<feature type="binding site" evidence="1">
    <location>
        <position position="69"/>
    </location>
    <ligand>
        <name>Ca(2+)</name>
        <dbReference type="ChEBI" id="CHEBI:29108"/>
        <label>2</label>
        <note>high affinity</note>
    </ligand>
</feature>
<feature type="binding site" evidence="1">
    <location>
        <position position="71"/>
    </location>
    <ligand>
        <name>Ca(2+)</name>
        <dbReference type="ChEBI" id="CHEBI:29108"/>
        <label>2</label>
        <note>high affinity</note>
    </ligand>
</feature>
<feature type="binding site" evidence="1">
    <location>
        <position position="73"/>
    </location>
    <ligand>
        <name>Ca(2+)</name>
        <dbReference type="ChEBI" id="CHEBI:29108"/>
        <label>2</label>
        <note>high affinity</note>
    </ligand>
</feature>
<feature type="binding site" evidence="1">
    <location>
        <position position="78"/>
    </location>
    <ligand>
        <name>Ca(2+)</name>
        <dbReference type="ChEBI" id="CHEBI:29108"/>
        <label>2</label>
        <note>high affinity</note>
    </ligand>
</feature>
<name>S10AB_CHICK</name>